<proteinExistence type="evidence at protein level"/>
<sequence length="37" mass="4401">MKIRASVRPICEKCRLIRRRGRIIVICSNPKHKQRQG</sequence>
<gene>
    <name type="primary">rpl36</name>
</gene>
<comment type="function">
    <text evidence="6 7">Component of the chloroplast ribosome (chloro-ribosome), a dedicated translation machinery responsible for the synthesis of chloroplast genome-encoded proteins, including proteins of the transcription and translation machinery and components of the photosynthetic apparatus.</text>
</comment>
<comment type="subunit">
    <text evidence="1 2">Component of the chloroplast large ribosomal subunit (LSU). Mature 70S chloroplast ribosomes of higher plants consist of a small (30S) and a large (50S) subunit. The 30S small subunit contains 1 molecule of ribosomal RNA (16S rRNA) and 24 different proteins. The 50S large subunit contains 3 rRNA molecules (23S, 5S and 4.5S rRNA) and 33 different proteins.</text>
</comment>
<comment type="subcellular location">
    <subcellularLocation>
        <location evidence="1 2">Plastid</location>
        <location evidence="1 2">Chloroplast</location>
    </subcellularLocation>
</comment>
<comment type="mass spectrometry" mass="4492.6" method="Electrospray" evidence="1"/>
<comment type="similarity">
    <text evidence="5">Belongs to the bacterial ribosomal protein bL36 family.</text>
</comment>
<reference key="1">
    <citation type="journal article" date="1986" name="Nucleic Acids Res.">
        <title>Spinach plastid genes coding for initiation factor IF-1, ribosomal protein S11 and RNA polymerase alpha-subunit.</title>
        <authorList>
            <person name="Sijben-Mueller G."/>
            <person name="Hallick R.B."/>
            <person name="Alt J."/>
            <person name="Westhoff P."/>
            <person name="Herrmann R.G."/>
        </authorList>
    </citation>
    <scope>NUCLEOTIDE SEQUENCE [GENOMIC DNA]</scope>
</reference>
<reference key="2">
    <citation type="journal article" date="2000" name="J. Biol. Chem.">
        <title>The plastid ribosomal proteins. Identification of all the proteins in the 50S subunit of an organelle ribosome (chloroplast).</title>
        <authorList>
            <person name="Yamaguchi K."/>
            <person name="Subramanian A.R."/>
        </authorList>
    </citation>
    <scope>NUCLEOTIDE SEQUENCE [GENOMIC DNA]</scope>
    <scope>PROTEIN SEQUENCE OF 1-4</scope>
    <scope>SUBUNIT</scope>
    <scope>SUBCELLULAR LOCATION</scope>
    <scope>MASS SPECTROMETRY</scope>
    <source>
        <strain>cv. Alwaro</strain>
        <tissue>Leaf</tissue>
    </source>
</reference>
<reference key="3">
    <citation type="journal article" date="2001" name="Plant Mol. Biol.">
        <title>The plastid chromosome of spinach (Spinacia oleracea): complete nucleotide sequence and gene organization.</title>
        <authorList>
            <person name="Schmitz-Linneweber C."/>
            <person name="Maier R.M."/>
            <person name="Alcaraz J.-P."/>
            <person name="Cottet A."/>
            <person name="Herrmann R.G."/>
            <person name="Mache R."/>
        </authorList>
    </citation>
    <scope>NUCLEOTIDE SEQUENCE [LARGE SCALE GENOMIC DNA]</scope>
    <source>
        <strain>cv. Geant d'hiver</strain>
        <strain>cv. Monatol</strain>
    </source>
</reference>
<reference key="4">
    <citation type="journal article" date="1992" name="Plant Mol. Biol.">
        <title>Purification and characterization of seven chloroplast ribosomal proteins: evidence that organelle ribosomal protein genes are functional and that NH2-terminal processing occurs via multiple pathways in chloroplasts.</title>
        <authorList>
            <person name="Schmidt J."/>
            <person name="Herfurth E."/>
            <person name="Subramanian A.R."/>
        </authorList>
    </citation>
    <scope>PROTEIN SEQUENCE OF 1-20</scope>
    <source>
        <strain>cv. Alwaro</strain>
    </source>
</reference>
<reference key="5">
    <citation type="journal article" date="2007" name="Proc. Natl. Acad. Sci. U.S.A.">
        <title>Cryo-EM study of the spinach chloroplast ribosome reveals the structural and functional roles of plastid-specific ribosomal proteins.</title>
        <authorList>
            <person name="Sharma M.R."/>
            <person name="Wilson D.N."/>
            <person name="Datta P.P."/>
            <person name="Barat C."/>
            <person name="Schluenzen F."/>
            <person name="Fucini P."/>
            <person name="Agrawal R.K."/>
        </authorList>
    </citation>
    <scope>STRUCTURE BY ELECTRON MICROSCOPY (9.4 ANGSTROMS)</scope>
</reference>
<reference key="6">
    <citation type="journal article" date="2016" name="Sci. Rep.">
        <title>Cryo-EM structure of the large subunit of the spinach chloroplast ribosome.</title>
        <authorList>
            <person name="Ahmed T."/>
            <person name="Yin Z."/>
            <person name="Bhushan S."/>
        </authorList>
    </citation>
    <scope>STRUCTURE BY ELECTRON MICROSCOPY (3.50 ANGSTROMS)</scope>
</reference>
<reference key="7">
    <citation type="journal article" date="2017" name="EMBO J.">
        <title>The complete structure of the chloroplast 70S ribosome in complex with translation factor pY.</title>
        <authorList>
            <person name="Bieri P."/>
            <person name="Leibundgut M."/>
            <person name="Saurer M."/>
            <person name="Boehringer D."/>
            <person name="Ban N."/>
        </authorList>
    </citation>
    <scope>STRUCTURE BY ELECTRON MICROSCOPY (3.25 ANGSTROMS)</scope>
    <scope>SUBUNIT</scope>
    <scope>SUBCELLULAR LOCATION</scope>
</reference>
<organism>
    <name type="scientific">Spinacia oleracea</name>
    <name type="common">Spinach</name>
    <dbReference type="NCBI Taxonomy" id="3562"/>
    <lineage>
        <taxon>Eukaryota</taxon>
        <taxon>Viridiplantae</taxon>
        <taxon>Streptophyta</taxon>
        <taxon>Embryophyta</taxon>
        <taxon>Tracheophyta</taxon>
        <taxon>Spermatophyta</taxon>
        <taxon>Magnoliopsida</taxon>
        <taxon>eudicotyledons</taxon>
        <taxon>Gunneridae</taxon>
        <taxon>Pentapetalae</taxon>
        <taxon>Caryophyllales</taxon>
        <taxon>Chenopodiaceae</taxon>
        <taxon>Chenopodioideae</taxon>
        <taxon>Anserineae</taxon>
        <taxon>Spinacia</taxon>
    </lineage>
</organism>
<name>RK36_SPIOL</name>
<feature type="chain" id="PRO_0000126347" description="Large ribosomal subunit protein bL36c">
    <location>
        <begin position="1"/>
        <end position="37"/>
    </location>
</feature>
<feature type="strand" evidence="8">
    <location>
        <begin position="2"/>
        <end position="5"/>
    </location>
</feature>
<feature type="strand" evidence="8">
    <location>
        <begin position="11"/>
        <end position="13"/>
    </location>
</feature>
<feature type="strand" evidence="8">
    <location>
        <begin position="15"/>
        <end position="19"/>
    </location>
</feature>
<feature type="strand" evidence="8">
    <location>
        <begin position="22"/>
        <end position="26"/>
    </location>
</feature>
<feature type="helix" evidence="8">
    <location>
        <begin position="30"/>
        <end position="32"/>
    </location>
</feature>
<feature type="strand" evidence="8">
    <location>
        <begin position="34"/>
        <end position="36"/>
    </location>
</feature>
<keyword id="KW-0002">3D-structure</keyword>
<keyword id="KW-0150">Chloroplast</keyword>
<keyword id="KW-0903">Direct protein sequencing</keyword>
<keyword id="KW-0934">Plastid</keyword>
<keyword id="KW-1185">Reference proteome</keyword>
<keyword id="KW-0687">Ribonucleoprotein</keyword>
<keyword id="KW-0689">Ribosomal protein</keyword>
<protein>
    <recommendedName>
        <fullName evidence="4">Large ribosomal subunit protein bL36c</fullName>
    </recommendedName>
    <alternativeName>
        <fullName evidence="3">50S ribosomal protein L36, chloroplastic</fullName>
    </alternativeName>
</protein>
<dbReference type="EMBL" id="X03496">
    <property type="status" value="NOT_ANNOTATED_CDS"/>
    <property type="molecule type" value="Genomic_DNA"/>
</dbReference>
<dbReference type="EMBL" id="AF206521">
    <property type="protein sequence ID" value="AAF19198.1"/>
    <property type="molecule type" value="Genomic_DNA"/>
</dbReference>
<dbReference type="EMBL" id="AJ400848">
    <property type="protein sequence ID" value="CAB88761.1"/>
    <property type="molecule type" value="Genomic_DNA"/>
</dbReference>
<dbReference type="PIR" id="S26231">
    <property type="entry name" value="S26231"/>
</dbReference>
<dbReference type="RefSeq" id="NP_054968.1">
    <property type="nucleotide sequence ID" value="NC_002202.1"/>
</dbReference>
<dbReference type="PDB" id="4V61">
    <property type="method" value="EM"/>
    <property type="resolution" value="9.40 A"/>
    <property type="chains" value="6=24-37"/>
</dbReference>
<dbReference type="PDB" id="5H1S">
    <property type="method" value="EM"/>
    <property type="resolution" value="3.50 A"/>
    <property type="chains" value="f=1-37"/>
</dbReference>
<dbReference type="PDB" id="5MLC">
    <property type="method" value="EM"/>
    <property type="resolution" value="3.90 A"/>
    <property type="chains" value="6=1-37"/>
</dbReference>
<dbReference type="PDB" id="5MMI">
    <property type="method" value="EM"/>
    <property type="resolution" value="3.25 A"/>
    <property type="chains" value="5=1-37"/>
</dbReference>
<dbReference type="PDB" id="5MMM">
    <property type="method" value="EM"/>
    <property type="resolution" value="3.40 A"/>
    <property type="chains" value="5=1-37"/>
</dbReference>
<dbReference type="PDB" id="5X8P">
    <property type="method" value="EM"/>
    <property type="resolution" value="3.40 A"/>
    <property type="chains" value="5=1-37"/>
</dbReference>
<dbReference type="PDB" id="5X8T">
    <property type="method" value="EM"/>
    <property type="resolution" value="3.30 A"/>
    <property type="chains" value="5=1-37"/>
</dbReference>
<dbReference type="PDB" id="6ERI">
    <property type="method" value="EM"/>
    <property type="resolution" value="3.00 A"/>
    <property type="chains" value="Ae=1-37"/>
</dbReference>
<dbReference type="PDBsum" id="4V61"/>
<dbReference type="PDBsum" id="5H1S"/>
<dbReference type="PDBsum" id="5MLC"/>
<dbReference type="PDBsum" id="5MMI"/>
<dbReference type="PDBsum" id="5MMM"/>
<dbReference type="PDBsum" id="5X8P"/>
<dbReference type="PDBsum" id="5X8T"/>
<dbReference type="PDBsum" id="6ERI"/>
<dbReference type="EMDB" id="EMD-3525"/>
<dbReference type="EMDB" id="EMD-3531"/>
<dbReference type="EMDB" id="EMD-3533"/>
<dbReference type="EMDB" id="EMD-3941"/>
<dbReference type="EMDB" id="EMD-6709"/>
<dbReference type="EMDB" id="EMD-6711"/>
<dbReference type="EMDB" id="EMD-9572"/>
<dbReference type="SMR" id="P12230"/>
<dbReference type="FunCoup" id="P12230">
    <property type="interactions" value="41"/>
</dbReference>
<dbReference type="IntAct" id="P12230">
    <property type="interactions" value="1"/>
</dbReference>
<dbReference type="STRING" id="3562.P12230"/>
<dbReference type="GeneID" id="2715630"/>
<dbReference type="KEGG" id="soe:2715630"/>
<dbReference type="InParanoid" id="P12230"/>
<dbReference type="Proteomes" id="UP001155700">
    <property type="component" value="Chloroplast Pltd"/>
</dbReference>
<dbReference type="GO" id="GO:0009507">
    <property type="term" value="C:chloroplast"/>
    <property type="evidence" value="ECO:0007669"/>
    <property type="project" value="UniProtKB-SubCell"/>
</dbReference>
<dbReference type="GO" id="GO:1990904">
    <property type="term" value="C:ribonucleoprotein complex"/>
    <property type="evidence" value="ECO:0007669"/>
    <property type="project" value="UniProtKB-KW"/>
</dbReference>
<dbReference type="GO" id="GO:0005840">
    <property type="term" value="C:ribosome"/>
    <property type="evidence" value="ECO:0007669"/>
    <property type="project" value="UniProtKB-KW"/>
</dbReference>
<dbReference type="GO" id="GO:0003735">
    <property type="term" value="F:structural constituent of ribosome"/>
    <property type="evidence" value="ECO:0007669"/>
    <property type="project" value="InterPro"/>
</dbReference>
<dbReference type="GO" id="GO:0006412">
    <property type="term" value="P:translation"/>
    <property type="evidence" value="ECO:0007669"/>
    <property type="project" value="UniProtKB-UniRule"/>
</dbReference>
<dbReference type="HAMAP" id="MF_00251">
    <property type="entry name" value="Ribosomal_bL36"/>
    <property type="match status" value="1"/>
</dbReference>
<dbReference type="InterPro" id="IPR000473">
    <property type="entry name" value="Ribosomal_bL36"/>
</dbReference>
<dbReference type="InterPro" id="IPR035977">
    <property type="entry name" value="Ribosomal_bL36_sp"/>
</dbReference>
<dbReference type="NCBIfam" id="TIGR01022">
    <property type="entry name" value="rpmJ_bact"/>
    <property type="match status" value="1"/>
</dbReference>
<dbReference type="PANTHER" id="PTHR42888">
    <property type="entry name" value="50S RIBOSOMAL PROTEIN L36, CHLOROPLASTIC"/>
    <property type="match status" value="1"/>
</dbReference>
<dbReference type="PANTHER" id="PTHR42888:SF1">
    <property type="entry name" value="LARGE RIBOSOMAL SUBUNIT PROTEIN BL36C"/>
    <property type="match status" value="1"/>
</dbReference>
<dbReference type="Pfam" id="PF00444">
    <property type="entry name" value="Ribosomal_L36"/>
    <property type="match status" value="1"/>
</dbReference>
<dbReference type="SUPFAM" id="SSF57840">
    <property type="entry name" value="Ribosomal protein L36"/>
    <property type="match status" value="1"/>
</dbReference>
<dbReference type="PROSITE" id="PS00828">
    <property type="entry name" value="RIBOSOMAL_L36"/>
    <property type="match status" value="1"/>
</dbReference>
<evidence type="ECO:0000269" key="1">
    <source>
    </source>
</evidence>
<evidence type="ECO:0000269" key="2">
    <source>
    </source>
</evidence>
<evidence type="ECO:0000303" key="3">
    <source>
    </source>
</evidence>
<evidence type="ECO:0000303" key="4">
    <source>
    </source>
</evidence>
<evidence type="ECO:0000305" key="5"/>
<evidence type="ECO:0000305" key="6">
    <source>
    </source>
</evidence>
<evidence type="ECO:0000305" key="7">
    <source>
    </source>
</evidence>
<evidence type="ECO:0007829" key="8">
    <source>
        <dbReference type="PDB" id="5MMI"/>
    </source>
</evidence>
<geneLocation type="chloroplast"/>
<accession>P12230</accession>